<evidence type="ECO:0000255" key="1">
    <source>
        <dbReference type="HAMAP-Rule" id="MF_01416"/>
    </source>
</evidence>
<protein>
    <recommendedName>
        <fullName evidence="1">ATP synthase subunit delta</fullName>
    </recommendedName>
    <alternativeName>
        <fullName evidence="1">ATP synthase F(1) sector subunit delta</fullName>
    </alternativeName>
    <alternativeName>
        <fullName evidence="1">F-type ATPase subunit delta</fullName>
        <shortName evidence="1">F-ATPase subunit delta</shortName>
    </alternativeName>
</protein>
<organism>
    <name type="scientific">Shewanella amazonensis (strain ATCC BAA-1098 / SB2B)</name>
    <dbReference type="NCBI Taxonomy" id="326297"/>
    <lineage>
        <taxon>Bacteria</taxon>
        <taxon>Pseudomonadati</taxon>
        <taxon>Pseudomonadota</taxon>
        <taxon>Gammaproteobacteria</taxon>
        <taxon>Alteromonadales</taxon>
        <taxon>Shewanellaceae</taxon>
        <taxon>Shewanella</taxon>
    </lineage>
</organism>
<proteinExistence type="inferred from homology"/>
<name>ATPD_SHEAM</name>
<sequence>MAELTTIARPYAKAAFDFAVEKQAVDSWAEMLGFAALVSENETMRPLLAGSMASSALAKLFIDVCGEQLNEHGQNLIKVMAENGRLEVLPAVAQLFAEYRLEWAKEVEADVVSATELSDAQQQQIGVSLEKRLARKVKLNCSVDAGLIAGVIIKAGDLVIDGSVSGKLARLSDKLQS</sequence>
<keyword id="KW-0066">ATP synthesis</keyword>
<keyword id="KW-0997">Cell inner membrane</keyword>
<keyword id="KW-1003">Cell membrane</keyword>
<keyword id="KW-0139">CF(1)</keyword>
<keyword id="KW-0375">Hydrogen ion transport</keyword>
<keyword id="KW-0406">Ion transport</keyword>
<keyword id="KW-0472">Membrane</keyword>
<keyword id="KW-1185">Reference proteome</keyword>
<keyword id="KW-0813">Transport</keyword>
<accession>A1SBU3</accession>
<feature type="chain" id="PRO_0000371125" description="ATP synthase subunit delta">
    <location>
        <begin position="1"/>
        <end position="177"/>
    </location>
</feature>
<comment type="function">
    <text evidence="1">F(1)F(0) ATP synthase produces ATP from ADP in the presence of a proton or sodium gradient. F-type ATPases consist of two structural domains, F(1) containing the extramembraneous catalytic core and F(0) containing the membrane proton channel, linked together by a central stalk and a peripheral stalk. During catalysis, ATP synthesis in the catalytic domain of F(1) is coupled via a rotary mechanism of the central stalk subunits to proton translocation.</text>
</comment>
<comment type="function">
    <text evidence="1">This protein is part of the stalk that links CF(0) to CF(1). It either transmits conformational changes from CF(0) to CF(1) or is implicated in proton conduction.</text>
</comment>
<comment type="subunit">
    <text evidence="1">F-type ATPases have 2 components, F(1) - the catalytic core - and F(0) - the membrane proton channel. F(1) has five subunits: alpha(3), beta(3), gamma(1), delta(1), epsilon(1). F(0) has three main subunits: a(1), b(2) and c(10-14). The alpha and beta chains form an alternating ring which encloses part of the gamma chain. F(1) is attached to F(0) by a central stalk formed by the gamma and epsilon chains, while a peripheral stalk is formed by the delta and b chains.</text>
</comment>
<comment type="subcellular location">
    <subcellularLocation>
        <location evidence="1">Cell inner membrane</location>
        <topology evidence="1">Peripheral membrane protein</topology>
    </subcellularLocation>
</comment>
<comment type="similarity">
    <text evidence="1">Belongs to the ATPase delta chain family.</text>
</comment>
<reference key="1">
    <citation type="submission" date="2006-12" db="EMBL/GenBank/DDBJ databases">
        <title>Complete sequence of Shewanella amazonensis SB2B.</title>
        <authorList>
            <consortium name="US DOE Joint Genome Institute"/>
            <person name="Copeland A."/>
            <person name="Lucas S."/>
            <person name="Lapidus A."/>
            <person name="Barry K."/>
            <person name="Detter J.C."/>
            <person name="Glavina del Rio T."/>
            <person name="Hammon N."/>
            <person name="Israni S."/>
            <person name="Dalin E."/>
            <person name="Tice H."/>
            <person name="Pitluck S."/>
            <person name="Munk A.C."/>
            <person name="Brettin T."/>
            <person name="Bruce D."/>
            <person name="Han C."/>
            <person name="Tapia R."/>
            <person name="Gilna P."/>
            <person name="Schmutz J."/>
            <person name="Larimer F."/>
            <person name="Land M."/>
            <person name="Hauser L."/>
            <person name="Kyrpides N."/>
            <person name="Mikhailova N."/>
            <person name="Fredrickson J."/>
            <person name="Richardson P."/>
        </authorList>
    </citation>
    <scope>NUCLEOTIDE SEQUENCE [LARGE SCALE GENOMIC DNA]</scope>
    <source>
        <strain>ATCC BAA-1098 / SB2B</strain>
    </source>
</reference>
<dbReference type="EMBL" id="CP000507">
    <property type="protein sequence ID" value="ABM01850.1"/>
    <property type="molecule type" value="Genomic_DNA"/>
</dbReference>
<dbReference type="RefSeq" id="WP_011761753.1">
    <property type="nucleotide sequence ID" value="NC_008700.1"/>
</dbReference>
<dbReference type="SMR" id="A1SBU3"/>
<dbReference type="STRING" id="326297.Sama_3647"/>
<dbReference type="KEGG" id="saz:Sama_3647"/>
<dbReference type="eggNOG" id="COG0712">
    <property type="taxonomic scope" value="Bacteria"/>
</dbReference>
<dbReference type="HOGENOM" id="CLU_085114_3_0_6"/>
<dbReference type="OrthoDB" id="9816221at2"/>
<dbReference type="Proteomes" id="UP000009175">
    <property type="component" value="Chromosome"/>
</dbReference>
<dbReference type="GO" id="GO:0005886">
    <property type="term" value="C:plasma membrane"/>
    <property type="evidence" value="ECO:0007669"/>
    <property type="project" value="UniProtKB-SubCell"/>
</dbReference>
<dbReference type="GO" id="GO:0045259">
    <property type="term" value="C:proton-transporting ATP synthase complex"/>
    <property type="evidence" value="ECO:0007669"/>
    <property type="project" value="UniProtKB-KW"/>
</dbReference>
<dbReference type="GO" id="GO:0046933">
    <property type="term" value="F:proton-transporting ATP synthase activity, rotational mechanism"/>
    <property type="evidence" value="ECO:0007669"/>
    <property type="project" value="UniProtKB-UniRule"/>
</dbReference>
<dbReference type="Gene3D" id="1.10.520.20">
    <property type="entry name" value="N-terminal domain of the delta subunit of the F1F0-ATP synthase"/>
    <property type="match status" value="1"/>
</dbReference>
<dbReference type="HAMAP" id="MF_01416">
    <property type="entry name" value="ATP_synth_delta_bact"/>
    <property type="match status" value="1"/>
</dbReference>
<dbReference type="InterPro" id="IPR026015">
    <property type="entry name" value="ATP_synth_OSCP/delta_N_sf"/>
</dbReference>
<dbReference type="InterPro" id="IPR000711">
    <property type="entry name" value="ATPase_OSCP/dsu"/>
</dbReference>
<dbReference type="NCBIfam" id="TIGR01145">
    <property type="entry name" value="ATP_synt_delta"/>
    <property type="match status" value="1"/>
</dbReference>
<dbReference type="NCBIfam" id="NF004402">
    <property type="entry name" value="PRK05758.2-2"/>
    <property type="match status" value="1"/>
</dbReference>
<dbReference type="NCBIfam" id="NF004404">
    <property type="entry name" value="PRK05758.2-5"/>
    <property type="match status" value="1"/>
</dbReference>
<dbReference type="PANTHER" id="PTHR11910">
    <property type="entry name" value="ATP SYNTHASE DELTA CHAIN"/>
    <property type="match status" value="1"/>
</dbReference>
<dbReference type="Pfam" id="PF00213">
    <property type="entry name" value="OSCP"/>
    <property type="match status" value="1"/>
</dbReference>
<dbReference type="PRINTS" id="PR00125">
    <property type="entry name" value="ATPASEDELTA"/>
</dbReference>
<dbReference type="SUPFAM" id="SSF47928">
    <property type="entry name" value="N-terminal domain of the delta subunit of the F1F0-ATP synthase"/>
    <property type="match status" value="1"/>
</dbReference>
<gene>
    <name evidence="1" type="primary">atpH</name>
    <name type="ordered locus">Sama_3647</name>
</gene>